<organism>
    <name type="scientific">Salmonella heidelberg (strain SL476)</name>
    <dbReference type="NCBI Taxonomy" id="454169"/>
    <lineage>
        <taxon>Bacteria</taxon>
        <taxon>Pseudomonadati</taxon>
        <taxon>Pseudomonadota</taxon>
        <taxon>Gammaproteobacteria</taxon>
        <taxon>Enterobacterales</taxon>
        <taxon>Enterobacteriaceae</taxon>
        <taxon>Salmonella</taxon>
    </lineage>
</organism>
<comment type="function">
    <text evidence="1">One of the primary rRNA binding proteins, it binds directly near the 3'-end of the 23S rRNA, where it nucleates assembly of the 50S subunit.</text>
</comment>
<comment type="subunit">
    <text evidence="1">Part of the 50S ribosomal subunit. Forms a cluster with proteins L14 and L19.</text>
</comment>
<comment type="PTM">
    <text evidence="1">Methylated by PrmB.</text>
</comment>
<comment type="similarity">
    <text evidence="1">Belongs to the universal ribosomal protein uL3 family.</text>
</comment>
<proteinExistence type="inferred from homology"/>
<evidence type="ECO:0000255" key="1">
    <source>
        <dbReference type="HAMAP-Rule" id="MF_01325"/>
    </source>
</evidence>
<evidence type="ECO:0000305" key="2"/>
<dbReference type="EMBL" id="CP001120">
    <property type="protein sequence ID" value="ACF66398.1"/>
    <property type="molecule type" value="Genomic_DNA"/>
</dbReference>
<dbReference type="RefSeq" id="WP_000579838.1">
    <property type="nucleotide sequence ID" value="NC_011083.1"/>
</dbReference>
<dbReference type="SMR" id="B4TKL5"/>
<dbReference type="KEGG" id="seh:SeHA_C3744"/>
<dbReference type="HOGENOM" id="CLU_044142_4_1_6"/>
<dbReference type="Proteomes" id="UP000001866">
    <property type="component" value="Chromosome"/>
</dbReference>
<dbReference type="GO" id="GO:0022625">
    <property type="term" value="C:cytosolic large ribosomal subunit"/>
    <property type="evidence" value="ECO:0007669"/>
    <property type="project" value="TreeGrafter"/>
</dbReference>
<dbReference type="GO" id="GO:0019843">
    <property type="term" value="F:rRNA binding"/>
    <property type="evidence" value="ECO:0007669"/>
    <property type="project" value="UniProtKB-UniRule"/>
</dbReference>
<dbReference type="GO" id="GO:0003735">
    <property type="term" value="F:structural constituent of ribosome"/>
    <property type="evidence" value="ECO:0007669"/>
    <property type="project" value="InterPro"/>
</dbReference>
<dbReference type="GO" id="GO:0006412">
    <property type="term" value="P:translation"/>
    <property type="evidence" value="ECO:0007669"/>
    <property type="project" value="UniProtKB-UniRule"/>
</dbReference>
<dbReference type="FunFam" id="2.40.30.10:FF:000004">
    <property type="entry name" value="50S ribosomal protein L3"/>
    <property type="match status" value="1"/>
</dbReference>
<dbReference type="FunFam" id="3.30.160.810:FF:000001">
    <property type="entry name" value="50S ribosomal protein L3"/>
    <property type="match status" value="1"/>
</dbReference>
<dbReference type="Gene3D" id="3.30.160.810">
    <property type="match status" value="1"/>
</dbReference>
<dbReference type="Gene3D" id="2.40.30.10">
    <property type="entry name" value="Translation factors"/>
    <property type="match status" value="1"/>
</dbReference>
<dbReference type="HAMAP" id="MF_01325_B">
    <property type="entry name" value="Ribosomal_uL3_B"/>
    <property type="match status" value="1"/>
</dbReference>
<dbReference type="InterPro" id="IPR000597">
    <property type="entry name" value="Ribosomal_uL3"/>
</dbReference>
<dbReference type="InterPro" id="IPR019927">
    <property type="entry name" value="Ribosomal_uL3_bac/org-type"/>
</dbReference>
<dbReference type="InterPro" id="IPR019926">
    <property type="entry name" value="Ribosomal_uL3_CS"/>
</dbReference>
<dbReference type="InterPro" id="IPR009000">
    <property type="entry name" value="Transl_B-barrel_sf"/>
</dbReference>
<dbReference type="NCBIfam" id="TIGR03625">
    <property type="entry name" value="L3_bact"/>
    <property type="match status" value="1"/>
</dbReference>
<dbReference type="PANTHER" id="PTHR11229">
    <property type="entry name" value="50S RIBOSOMAL PROTEIN L3"/>
    <property type="match status" value="1"/>
</dbReference>
<dbReference type="PANTHER" id="PTHR11229:SF16">
    <property type="entry name" value="LARGE RIBOSOMAL SUBUNIT PROTEIN UL3C"/>
    <property type="match status" value="1"/>
</dbReference>
<dbReference type="Pfam" id="PF00297">
    <property type="entry name" value="Ribosomal_L3"/>
    <property type="match status" value="1"/>
</dbReference>
<dbReference type="SUPFAM" id="SSF50447">
    <property type="entry name" value="Translation proteins"/>
    <property type="match status" value="1"/>
</dbReference>
<dbReference type="PROSITE" id="PS00474">
    <property type="entry name" value="RIBOSOMAL_L3"/>
    <property type="match status" value="1"/>
</dbReference>
<gene>
    <name evidence="1" type="primary">rplC</name>
    <name type="ordered locus">SeHA_C3744</name>
</gene>
<protein>
    <recommendedName>
        <fullName evidence="1">Large ribosomal subunit protein uL3</fullName>
    </recommendedName>
    <alternativeName>
        <fullName evidence="2">50S ribosomal protein L3</fullName>
    </alternativeName>
</protein>
<accession>B4TKL5</accession>
<name>RL3_SALHS</name>
<reference key="1">
    <citation type="journal article" date="2011" name="J. Bacteriol.">
        <title>Comparative genomics of 28 Salmonella enterica isolates: evidence for CRISPR-mediated adaptive sublineage evolution.</title>
        <authorList>
            <person name="Fricke W.F."/>
            <person name="Mammel M.K."/>
            <person name="McDermott P.F."/>
            <person name="Tartera C."/>
            <person name="White D.G."/>
            <person name="Leclerc J.E."/>
            <person name="Ravel J."/>
            <person name="Cebula T.A."/>
        </authorList>
    </citation>
    <scope>NUCLEOTIDE SEQUENCE [LARGE SCALE GENOMIC DNA]</scope>
    <source>
        <strain>SL476</strain>
    </source>
</reference>
<keyword id="KW-0488">Methylation</keyword>
<keyword id="KW-0687">Ribonucleoprotein</keyword>
<keyword id="KW-0689">Ribosomal protein</keyword>
<keyword id="KW-0694">RNA-binding</keyword>
<keyword id="KW-0699">rRNA-binding</keyword>
<feature type="chain" id="PRO_1000141916" description="Large ribosomal subunit protein uL3">
    <location>
        <begin position="1"/>
        <end position="209"/>
    </location>
</feature>
<feature type="modified residue" description="N5-methylglutamine" evidence="1">
    <location>
        <position position="150"/>
    </location>
</feature>
<sequence>MIGLVGKKVGMTRIFTEDGVSIPVTVIEVEANRVTQVKDLANDGYRAVQVTTGAKKANRVTKPEAGHFAKAGVEAGRGLWEFRLAEGEEYTVGQSISVELFADVKKVDVTGTSKGKGFAGTVKRWNFRTQDATHGNSLSHRVPGSIGQNQTPGKVFKGKKMAGQMGNERVTVQSLDVVRVDAERNLLLVKGGVPGATGCDLIVKPAVKA</sequence>